<organism>
    <name type="scientific">Saccharomyces cerevisiae (strain ATCC 204508 / S288c)</name>
    <name type="common">Baker's yeast</name>
    <dbReference type="NCBI Taxonomy" id="559292"/>
    <lineage>
        <taxon>Eukaryota</taxon>
        <taxon>Fungi</taxon>
        <taxon>Dikarya</taxon>
        <taxon>Ascomycota</taxon>
        <taxon>Saccharomycotina</taxon>
        <taxon>Saccharomycetes</taxon>
        <taxon>Saccharomycetales</taxon>
        <taxon>Saccharomycetaceae</taxon>
        <taxon>Saccharomyces</taxon>
    </lineage>
</organism>
<feature type="chain" id="PRO_0000172519" description="Low-affinity phosphate transporter PHO91">
    <location>
        <begin position="1"/>
        <end position="894"/>
    </location>
</feature>
<feature type="transmembrane region" description="Helical" evidence="1">
    <location>
        <begin position="430"/>
        <end position="450"/>
    </location>
</feature>
<feature type="transmembrane region" description="Helical" evidence="1">
    <location>
        <begin position="474"/>
        <end position="494"/>
    </location>
</feature>
<feature type="transmembrane region" description="Helical" evidence="1">
    <location>
        <begin position="511"/>
        <end position="531"/>
    </location>
</feature>
<feature type="transmembrane region" description="Helical" evidence="1">
    <location>
        <begin position="557"/>
        <end position="577"/>
    </location>
</feature>
<feature type="transmembrane region" description="Helical" evidence="1">
    <location>
        <begin position="602"/>
        <end position="622"/>
    </location>
</feature>
<feature type="transmembrane region" description="Helical" evidence="1">
    <location>
        <begin position="642"/>
        <end position="662"/>
    </location>
</feature>
<feature type="transmembrane region" description="Helical" evidence="1">
    <location>
        <begin position="682"/>
        <end position="702"/>
    </location>
</feature>
<feature type="transmembrane region" description="Helical" evidence="1">
    <location>
        <begin position="706"/>
        <end position="726"/>
    </location>
</feature>
<feature type="transmembrane region" description="Helical" evidence="1">
    <location>
        <begin position="738"/>
        <end position="758"/>
    </location>
</feature>
<feature type="transmembrane region" description="Helical" evidence="1">
    <location>
        <begin position="777"/>
        <end position="797"/>
    </location>
</feature>
<feature type="transmembrane region" description="Helical" evidence="1">
    <location>
        <begin position="799"/>
        <end position="819"/>
    </location>
</feature>
<feature type="transmembrane region" description="Helical" evidence="1">
    <location>
        <begin position="824"/>
        <end position="844"/>
    </location>
</feature>
<feature type="transmembrane region" description="Helical" evidence="1">
    <location>
        <begin position="874"/>
        <end position="894"/>
    </location>
</feature>
<feature type="domain" description="SPX" evidence="2">
    <location>
        <begin position="1"/>
        <end position="256"/>
    </location>
</feature>
<feature type="region of interest" description="Disordered" evidence="3">
    <location>
        <begin position="124"/>
        <end position="160"/>
    </location>
</feature>
<feature type="region of interest" description="Disordered" evidence="3">
    <location>
        <begin position="293"/>
        <end position="321"/>
    </location>
</feature>
<feature type="compositionally biased region" description="Basic residues" evidence="3">
    <location>
        <begin position="132"/>
        <end position="144"/>
    </location>
</feature>
<feature type="compositionally biased region" description="Polar residues" evidence="3">
    <location>
        <begin position="151"/>
        <end position="160"/>
    </location>
</feature>
<feature type="modified residue" description="Phosphoserine" evidence="11 13">
    <location>
        <position position="295"/>
    </location>
</feature>
<feature type="modified residue" description="Phosphoserine" evidence="11 12 13">
    <location>
        <position position="311"/>
    </location>
</feature>
<feature type="modified residue" description="Phosphoserine" evidence="12 13">
    <location>
        <position position="312"/>
    </location>
</feature>
<comment type="function">
    <text evidence="4 7 9">Vacuolar phosphate transporter that probably exports phosphate from the vacuolar lumen to the cytosol.</text>
</comment>
<comment type="subcellular location">
    <subcellularLocation>
        <location evidence="7">Vacuole membrane</location>
        <topology evidence="7">Multi-pass membrane protein</topology>
    </subcellularLocation>
</comment>
<comment type="induction">
    <text evidence="5">Expression is constitutive and independent of inorganic phosphate concentration and PHO4 activity.</text>
</comment>
<comment type="PTM">
    <text evidence="8">Ubiquitinated by RSP5. RSP5-mediated ubiquitination initiates internalization and degradation by the endocytic pathway.</text>
</comment>
<comment type="miscellaneous">
    <text evidence="6">Present with 4280 molecules/cell in log phase SD medium.</text>
</comment>
<comment type="similarity">
    <text evidence="10">Belongs to the CitM (TC 2.A.11) transporter family.</text>
</comment>
<comment type="sequence caution" evidence="10">
    <conflict type="erroneous initiation">
        <sequence resource="EMBL-CDS" id="CAA37947"/>
    </conflict>
    <text>Truncated N-terminus.</text>
</comment>
<dbReference type="EMBL" id="X77395">
    <property type="protein sequence ID" value="CAA54581.1"/>
    <property type="molecule type" value="Genomic_DNA"/>
</dbReference>
<dbReference type="EMBL" id="Z71628">
    <property type="protein sequence ID" value="CAA96290.1"/>
    <property type="molecule type" value="Genomic_DNA"/>
</dbReference>
<dbReference type="EMBL" id="Z71629">
    <property type="protein sequence ID" value="CAA96292.1"/>
    <property type="molecule type" value="Genomic_DNA"/>
</dbReference>
<dbReference type="EMBL" id="X53998">
    <property type="protein sequence ID" value="CAA37947.1"/>
    <property type="status" value="ALT_INIT"/>
    <property type="molecule type" value="Genomic_DNA"/>
</dbReference>
<dbReference type="EMBL" id="BK006947">
    <property type="protein sequence ID" value="DAA10554.1"/>
    <property type="molecule type" value="Genomic_DNA"/>
</dbReference>
<dbReference type="PIR" id="S45135">
    <property type="entry name" value="S45135"/>
</dbReference>
<dbReference type="RefSeq" id="NP_014410.3">
    <property type="nucleotide sequence ID" value="NM_001183190.3"/>
</dbReference>
<dbReference type="SMR" id="P27514"/>
<dbReference type="BioGRID" id="35838">
    <property type="interactions" value="263"/>
</dbReference>
<dbReference type="DIP" id="DIP-4264N"/>
<dbReference type="FunCoup" id="P27514">
    <property type="interactions" value="147"/>
</dbReference>
<dbReference type="IntAct" id="P27514">
    <property type="interactions" value="44"/>
</dbReference>
<dbReference type="MINT" id="P27514"/>
<dbReference type="STRING" id="4932.YNR013C"/>
<dbReference type="TCDB" id="2.A.47.2.2">
    <property type="family name" value="the divalent anion:na(+) symporter (dass) family"/>
</dbReference>
<dbReference type="GlyGen" id="P27514">
    <property type="glycosylation" value="3 sites, 1 O-linked glycan (3 sites)"/>
</dbReference>
<dbReference type="iPTMnet" id="P27514"/>
<dbReference type="PaxDb" id="4932-YNR013C"/>
<dbReference type="PeptideAtlas" id="P27514"/>
<dbReference type="EnsemblFungi" id="YNR013C_mRNA">
    <property type="protein sequence ID" value="YNR013C"/>
    <property type="gene ID" value="YNR013C"/>
</dbReference>
<dbReference type="GeneID" id="855747"/>
<dbReference type="KEGG" id="sce:YNR013C"/>
<dbReference type="AGR" id="SGD:S000005296"/>
<dbReference type="SGD" id="S000005296">
    <property type="gene designation" value="PHO91"/>
</dbReference>
<dbReference type="VEuPathDB" id="FungiDB:YNR013C"/>
<dbReference type="eggNOG" id="KOG1281">
    <property type="taxonomic scope" value="Eukaryota"/>
</dbReference>
<dbReference type="GeneTree" id="ENSGT01030000234550"/>
<dbReference type="HOGENOM" id="CLU_005170_8_0_1"/>
<dbReference type="InParanoid" id="P27514"/>
<dbReference type="OMA" id="GYGLMYI"/>
<dbReference type="OrthoDB" id="10260443at2759"/>
<dbReference type="BioCyc" id="YEAST:G3O-33329-MONOMER"/>
<dbReference type="BRENDA" id="7.3.2.1">
    <property type="organism ID" value="984"/>
</dbReference>
<dbReference type="BioGRID-ORCS" id="855747">
    <property type="hits" value="5 hits in 10 CRISPR screens"/>
</dbReference>
<dbReference type="PRO" id="PR:P27514"/>
<dbReference type="Proteomes" id="UP000002311">
    <property type="component" value="Chromosome XIV"/>
</dbReference>
<dbReference type="RNAct" id="P27514">
    <property type="molecule type" value="protein"/>
</dbReference>
<dbReference type="GO" id="GO:0000329">
    <property type="term" value="C:fungal-type vacuole membrane"/>
    <property type="evidence" value="ECO:0000314"/>
    <property type="project" value="SGD"/>
</dbReference>
<dbReference type="GO" id="GO:0005886">
    <property type="term" value="C:plasma membrane"/>
    <property type="evidence" value="ECO:0000318"/>
    <property type="project" value="GO_Central"/>
</dbReference>
<dbReference type="GO" id="GO:1990816">
    <property type="term" value="C:vacuole-mitochondrion membrane contact site"/>
    <property type="evidence" value="ECO:0000314"/>
    <property type="project" value="SGD"/>
</dbReference>
<dbReference type="GO" id="GO:0015169">
    <property type="term" value="F:glycerol-3-phosphate transmembrane transporter activity"/>
    <property type="evidence" value="ECO:0000315"/>
    <property type="project" value="SGD"/>
</dbReference>
<dbReference type="GO" id="GO:0005315">
    <property type="term" value="F:phosphate transmembrane transporter activity"/>
    <property type="evidence" value="ECO:0000315"/>
    <property type="project" value="SGD"/>
</dbReference>
<dbReference type="GO" id="GO:0015794">
    <property type="term" value="P:glycerol-3-phosphate transmembrane transport"/>
    <property type="evidence" value="ECO:0000315"/>
    <property type="project" value="SGD"/>
</dbReference>
<dbReference type="GO" id="GO:0006817">
    <property type="term" value="P:phosphate ion transport"/>
    <property type="evidence" value="ECO:0000316"/>
    <property type="project" value="SGD"/>
</dbReference>
<dbReference type="GO" id="GO:0006797">
    <property type="term" value="P:polyphosphate metabolic process"/>
    <property type="evidence" value="ECO:0000315"/>
    <property type="project" value="SGD"/>
</dbReference>
<dbReference type="GO" id="GO:2000185">
    <property type="term" value="P:regulation of phosphate transmembrane transport"/>
    <property type="evidence" value="ECO:0000316"/>
    <property type="project" value="SGD"/>
</dbReference>
<dbReference type="GO" id="GO:0055085">
    <property type="term" value="P:transmembrane transport"/>
    <property type="evidence" value="ECO:0000318"/>
    <property type="project" value="GO_Central"/>
</dbReference>
<dbReference type="CDD" id="cd01115">
    <property type="entry name" value="SLC13_permease"/>
    <property type="match status" value="1"/>
</dbReference>
<dbReference type="CDD" id="cd14478">
    <property type="entry name" value="SPX_PHO87_PHO90_like"/>
    <property type="match status" value="1"/>
</dbReference>
<dbReference type="InterPro" id="IPR004680">
    <property type="entry name" value="Cit_transptr-like_dom"/>
</dbReference>
<dbReference type="InterPro" id="IPR004331">
    <property type="entry name" value="SPX_dom"/>
</dbReference>
<dbReference type="PANTHER" id="PTHR10283:SF92">
    <property type="entry name" value="LOW-AFFINITY PHOSPHATE TRANSPORTER PHO91"/>
    <property type="match status" value="1"/>
</dbReference>
<dbReference type="PANTHER" id="PTHR10283">
    <property type="entry name" value="SOLUTE CARRIER FAMILY 13 MEMBER"/>
    <property type="match status" value="1"/>
</dbReference>
<dbReference type="Pfam" id="PF03600">
    <property type="entry name" value="CitMHS"/>
    <property type="match status" value="1"/>
</dbReference>
<dbReference type="Pfam" id="PF03105">
    <property type="entry name" value="SPX"/>
    <property type="match status" value="2"/>
</dbReference>
<dbReference type="PROSITE" id="PS51382">
    <property type="entry name" value="SPX"/>
    <property type="match status" value="1"/>
</dbReference>
<protein>
    <recommendedName>
        <fullName>Low-affinity phosphate transporter PHO91</fullName>
    </recommendedName>
</protein>
<gene>
    <name type="primary">PHO91</name>
    <name type="ordered locus">YNR013C</name>
    <name type="ORF">N2052</name>
</gene>
<proteinExistence type="evidence at protein level"/>
<keyword id="KW-0472">Membrane</keyword>
<keyword id="KW-0592">Phosphate transport</keyword>
<keyword id="KW-0597">Phosphoprotein</keyword>
<keyword id="KW-1185">Reference proteome</keyword>
<keyword id="KW-0812">Transmembrane</keyword>
<keyword id="KW-1133">Transmembrane helix</keyword>
<keyword id="KW-0813">Transport</keyword>
<keyword id="KW-0832">Ubl conjugation</keyword>
<keyword id="KW-0926">Vacuole</keyword>
<evidence type="ECO:0000255" key="1"/>
<evidence type="ECO:0000255" key="2">
    <source>
        <dbReference type="PROSITE-ProRule" id="PRU00714"/>
    </source>
</evidence>
<evidence type="ECO:0000256" key="3">
    <source>
        <dbReference type="SAM" id="MobiDB-lite"/>
    </source>
</evidence>
<evidence type="ECO:0000269" key="4">
    <source>
    </source>
</evidence>
<evidence type="ECO:0000269" key="5">
    <source>
    </source>
</evidence>
<evidence type="ECO:0000269" key="6">
    <source>
    </source>
</evidence>
<evidence type="ECO:0000269" key="7">
    <source>
    </source>
</evidence>
<evidence type="ECO:0000269" key="8">
    <source>
    </source>
</evidence>
<evidence type="ECO:0000269" key="9">
    <source>
    </source>
</evidence>
<evidence type="ECO:0000305" key="10"/>
<evidence type="ECO:0007744" key="11">
    <source>
    </source>
</evidence>
<evidence type="ECO:0007744" key="12">
    <source>
    </source>
</evidence>
<evidence type="ECO:0007744" key="13">
    <source>
    </source>
</evidence>
<reference key="1">
    <citation type="journal article" date="1994" name="Yeast">
        <title>Twelve open reading frames revealed in the 23.6 kb segment flanking the centromere on the Saccharomyces cerevisiae chromosome XIV right arm.</title>
        <authorList>
            <person name="Verhasselt P."/>
            <person name="Aert R."/>
            <person name="Voet M."/>
            <person name="Volckaert G."/>
        </authorList>
    </citation>
    <scope>NUCLEOTIDE SEQUENCE [GENOMIC DNA]</scope>
    <source>
        <strain>ATCC 96604 / S288c / FY1679</strain>
    </source>
</reference>
<reference key="2">
    <citation type="journal article" date="1997" name="Nature">
        <title>The nucleotide sequence of Saccharomyces cerevisiae chromosome XIV and its evolutionary implications.</title>
        <authorList>
            <person name="Philippsen P."/>
            <person name="Kleine K."/>
            <person name="Poehlmann R."/>
            <person name="Duesterhoeft A."/>
            <person name="Hamberg K."/>
            <person name="Hegemann J.H."/>
            <person name="Obermaier B."/>
            <person name="Urrestarazu L.A."/>
            <person name="Aert R."/>
            <person name="Albermann K."/>
            <person name="Altmann R."/>
            <person name="Andre B."/>
            <person name="Baladron V."/>
            <person name="Ballesta J.P.G."/>
            <person name="Becam A.-M."/>
            <person name="Beinhauer J.D."/>
            <person name="Boskovic J."/>
            <person name="Buitrago M.J."/>
            <person name="Bussereau F."/>
            <person name="Coster F."/>
            <person name="Crouzet M."/>
            <person name="D'Angelo M."/>
            <person name="Dal Pero F."/>
            <person name="De Antoni A."/>
            <person name="del Rey F."/>
            <person name="Doignon F."/>
            <person name="Domdey H."/>
            <person name="Dubois E."/>
            <person name="Fiedler T.A."/>
            <person name="Fleig U."/>
            <person name="Floeth M."/>
            <person name="Fritz C."/>
            <person name="Gaillardin C."/>
            <person name="Garcia-Cantalejo J.M."/>
            <person name="Glansdorff N."/>
            <person name="Goffeau A."/>
            <person name="Gueldener U."/>
            <person name="Herbert C.J."/>
            <person name="Heumann K."/>
            <person name="Heuss-Neitzel D."/>
            <person name="Hilbert H."/>
            <person name="Hinni K."/>
            <person name="Iraqui Houssaini I."/>
            <person name="Jacquet M."/>
            <person name="Jimenez A."/>
            <person name="Jonniaux J.-L."/>
            <person name="Karpfinger-Hartl L."/>
            <person name="Lanfranchi G."/>
            <person name="Lepingle A."/>
            <person name="Levesque H."/>
            <person name="Lyck R."/>
            <person name="Maftahi M."/>
            <person name="Mallet L."/>
            <person name="Maurer C.T.C."/>
            <person name="Messenguy F."/>
            <person name="Mewes H.-W."/>
            <person name="Moestl D."/>
            <person name="Nasr F."/>
            <person name="Nicaud J.-M."/>
            <person name="Niedenthal R.K."/>
            <person name="Pandolfo D."/>
            <person name="Pierard A."/>
            <person name="Piravandi E."/>
            <person name="Planta R.J."/>
            <person name="Pohl T.M."/>
            <person name="Purnelle B."/>
            <person name="Rebischung C."/>
            <person name="Remacha M.A."/>
            <person name="Revuelta J.L."/>
            <person name="Rinke M."/>
            <person name="Saiz J.E."/>
            <person name="Sartorello F."/>
            <person name="Scherens B."/>
            <person name="Sen-Gupta M."/>
            <person name="Soler-Mira A."/>
            <person name="Urbanus J.H.M."/>
            <person name="Valle G."/>
            <person name="Van Dyck L."/>
            <person name="Verhasselt P."/>
            <person name="Vierendeels F."/>
            <person name="Vissers S."/>
            <person name="Voet M."/>
            <person name="Volckaert G."/>
            <person name="Wach A."/>
            <person name="Wambutt R."/>
            <person name="Wedler H."/>
            <person name="Zollner A."/>
            <person name="Hani J."/>
        </authorList>
    </citation>
    <scope>NUCLEOTIDE SEQUENCE [LARGE SCALE GENOMIC DNA]</scope>
    <source>
        <strain>ATCC 204508 / S288c</strain>
    </source>
</reference>
<reference key="3">
    <citation type="journal article" date="2014" name="G3 (Bethesda)">
        <title>The reference genome sequence of Saccharomyces cerevisiae: Then and now.</title>
        <authorList>
            <person name="Engel S.R."/>
            <person name="Dietrich F.S."/>
            <person name="Fisk D.G."/>
            <person name="Binkley G."/>
            <person name="Balakrishnan R."/>
            <person name="Costanzo M.C."/>
            <person name="Dwight S.S."/>
            <person name="Hitz B.C."/>
            <person name="Karra K."/>
            <person name="Nash R.S."/>
            <person name="Weng S."/>
            <person name="Wong E.D."/>
            <person name="Lloyd P."/>
            <person name="Skrzypek M.S."/>
            <person name="Miyasato S.R."/>
            <person name="Simison M."/>
            <person name="Cherry J.M."/>
        </authorList>
    </citation>
    <scope>GENOME REANNOTATION</scope>
    <source>
        <strain>ATCC 204508 / S288c</strain>
    </source>
</reference>
<reference key="4">
    <citation type="journal article" date="1990" name="Nucleic Acids Res.">
        <title>The URK1 gene of Saccharomyces cerevisiae encoding uridine kinase.</title>
        <authorList>
            <person name="Kern L."/>
        </authorList>
    </citation>
    <scope>NUCLEOTIDE SEQUENCE [GENOMIC DNA] OF 784-894</scope>
    <source>
        <strain>ATCC 28383 / FL100 / VTT C-80102</strain>
    </source>
</reference>
<reference key="5">
    <citation type="journal article" date="2001" name="Genetics">
        <title>Phosphate transport and sensing in Saccharomyces cerevisiae.</title>
        <authorList>
            <person name="Wykoff D.D."/>
            <person name="O'Shea E.K."/>
        </authorList>
    </citation>
    <scope>FUNCTION</scope>
</reference>
<reference key="6">
    <citation type="journal article" date="2003" name="Biochem. Biophys. Res. Commun.">
        <title>Transcriptional regulation of phosphate-responsive genes in low-affinity phosphate-transporter-defective mutants in Saccharomyces cerevisiae.</title>
        <authorList>
            <person name="Auesukaree C."/>
            <person name="Homma T."/>
            <person name="Kaneko Y."/>
            <person name="Harashima S."/>
        </authorList>
    </citation>
    <scope>INDUCTION</scope>
</reference>
<reference key="7">
    <citation type="journal article" date="2003" name="Nature">
        <title>Global analysis of protein expression in yeast.</title>
        <authorList>
            <person name="Ghaemmaghami S."/>
            <person name="Huh W.-K."/>
            <person name="Bower K."/>
            <person name="Howson R.W."/>
            <person name="Belle A."/>
            <person name="Dephoure N."/>
            <person name="O'Shea E.K."/>
            <person name="Weissman J.S."/>
        </authorList>
    </citation>
    <scope>LEVEL OF PROTEIN EXPRESSION [LARGE SCALE ANALYSIS]</scope>
</reference>
<reference key="8">
    <citation type="journal article" date="2007" name="J. Proteome Res.">
        <title>Large-scale phosphorylation analysis of alpha-factor-arrested Saccharomyces cerevisiae.</title>
        <authorList>
            <person name="Li X."/>
            <person name="Gerber S.A."/>
            <person name="Rudner A.D."/>
            <person name="Beausoleil S.A."/>
            <person name="Haas W."/>
            <person name="Villen J."/>
            <person name="Elias J.E."/>
            <person name="Gygi S.P."/>
        </authorList>
    </citation>
    <scope>PHOSPHORYLATION [LARGE SCALE ANALYSIS] AT SER-295 AND SER-311</scope>
    <scope>IDENTIFICATION BY MASS SPECTROMETRY [LARGE SCALE ANALYSIS]</scope>
    <source>
        <strain>ADR376</strain>
    </source>
</reference>
<reference key="9">
    <citation type="journal article" date="2007" name="Mol. Biol. Cell">
        <title>Pho91 is a vacuolar phosphate transporter that regulates phosphate and polyphosphate metabolism in Saccharomyces cerevisiae.</title>
        <authorList>
            <person name="Hurlimann H.C."/>
            <person name="Stadler-Waibel M."/>
            <person name="Werner T.P."/>
            <person name="Freimoser F.M."/>
        </authorList>
    </citation>
    <scope>FUNCTION</scope>
    <scope>SUBCELLULAR LOCATION</scope>
</reference>
<reference key="10">
    <citation type="journal article" date="2008" name="J. Biol. Chem.">
        <title>The Rsp5 E3 ligase mediates turnover of low affinity phosphate transporters in Saccharomyces cerevisiae.</title>
        <authorList>
            <person name="Estrella L.A."/>
            <person name="Krishnamurthy S."/>
            <person name="Timme C.R."/>
            <person name="Hampsey M."/>
        </authorList>
    </citation>
    <scope>UBIQUITINATION BY RSP5</scope>
</reference>
<reference key="11">
    <citation type="journal article" date="2008" name="Mol. Cell. Proteomics">
        <title>A multidimensional chromatography technology for in-depth phosphoproteome analysis.</title>
        <authorList>
            <person name="Albuquerque C.P."/>
            <person name="Smolka M.B."/>
            <person name="Payne S.H."/>
            <person name="Bafna V."/>
            <person name="Eng J."/>
            <person name="Zhou H."/>
        </authorList>
    </citation>
    <scope>PHOSPHORYLATION [LARGE SCALE ANALYSIS] AT SER-311 AND SER-312</scope>
    <scope>IDENTIFICATION BY MASS SPECTROMETRY [LARGE SCALE ANALYSIS]</scope>
</reference>
<reference key="12">
    <citation type="journal article" date="2009" name="Science">
        <title>Global analysis of Cdk1 substrate phosphorylation sites provides insights into evolution.</title>
        <authorList>
            <person name="Holt L.J."/>
            <person name="Tuch B.B."/>
            <person name="Villen J."/>
            <person name="Johnson A.D."/>
            <person name="Gygi S.P."/>
            <person name="Morgan D.O."/>
        </authorList>
    </citation>
    <scope>PHOSPHORYLATION [LARGE SCALE ANALYSIS] AT SER-295; SER-311 AND SER-312</scope>
    <scope>IDENTIFICATION BY MASS SPECTROMETRY [LARGE SCALE ANALYSIS]</scope>
</reference>
<reference key="13">
    <citation type="journal article" date="2010" name="Proc. Natl. Acad. Sci. U.S.A.">
        <title>Transport and signaling through the phosphate-binding site of the yeast Pho84 phosphate transceptor.</title>
        <authorList>
            <person name="Popova Y."/>
            <person name="Thayumanavan P."/>
            <person name="Lonati E."/>
            <person name="Agrochao M."/>
            <person name="Thevelein J.M."/>
        </authorList>
    </citation>
    <scope>FUNCTION</scope>
</reference>
<name>PHO91_YEAST</name>
<sequence>MKFSHSLQFNSVPEWSTKYLAYSQLKKLIYSLQKDKLYSNNKHHVVEPHDANDENLPLLADASPDDQFYISKFVAALNQELKKIDKFYISQETGLIANYNELKDDVMELENTNKATQLFNQQQQHQLQSVARNRKSKSQQRQRRFSSVSSTDSNPSLTDMSIDSAPVIHTQVSNTTNNGNSMQNLASASVSLSNSNPVYLSPFTQHRLSLKKRLISIYTQLSELKDFIELNQTGFSKICKKFDKSLNTNLKQNYLNYIKFHSHVFNPATINRIQHHITETILTYASLNKGTRRPSNTFNLDADRINNDENSSGNEEDEDGNRQEVLDFQDAERELSSHLRDHVVWERNTVWKDMMNLERKYQSAKTDNKKFSKLSSSQLRPNANITESMAMSSGGAGIIAPSTDSLTFRELMHLPPKQWLQFIMGQTSLLKFLLITSCFIALLTFNLTPFTQDSLQKNCFAILIYASLLWATETIPLFVTSLMIPLLIVVFPVIKDPITSQPMSPRDSSQFILSTMWSSVIMLLLGGFTLAAALSKYNIAKVLSTHILASAGTNPHFILLTNMFVALFVSMWVSNVAAPVLCYSIVQPLLRTLPRNCSYAKALILGIALASNIGGMSSPIASPQNIFSIGIMDPSPSWAEWFMIALPVCFICVMAIWVLLIITFPPEPNVKILQLHPSRDPFTLKQWFVTLVCIITIVLWCLSNQISGIFGEMGIISIIPIVVFFGTGLLTSDDFNNFMWTIVVLAMGGTTLGKAVSSSGLLSTMAQLIKAQVEHEPIFIIVLIFGLVILVMATFVSHTVAAMIIVPLMSEIGSNLPSGDHSRLLIVIAALLCSSAMGLPTSGFPNVTAISMIDEVGDRYLTVGTFITRGVPASLLSYAAIVTVGYGILKVMGF</sequence>
<accession>P27514</accession>
<accession>D6W1I8</accession>